<name>MTB2_BACAM</name>
<keyword id="KW-0238">DNA-binding</keyword>
<keyword id="KW-0489">Methyltransferase</keyword>
<keyword id="KW-0680">Restriction system</keyword>
<keyword id="KW-0949">S-adenosyl-L-methionine</keyword>
<keyword id="KW-0808">Transferase</keyword>
<dbReference type="EC" id="2.1.1.113"/>
<dbReference type="EMBL" id="X53032">
    <property type="protein sequence ID" value="CAA37205.1"/>
    <property type="molecule type" value="Genomic_DNA"/>
</dbReference>
<dbReference type="PIR" id="S10316">
    <property type="entry name" value="S10316"/>
</dbReference>
<dbReference type="SMR" id="P18051"/>
<dbReference type="REBASE" id="157607">
    <property type="entry name" value="M2.Rso10709ORF7P"/>
</dbReference>
<dbReference type="REBASE" id="186">
    <property type="entry name" value="M.BamHII"/>
</dbReference>
<dbReference type="REBASE" id="204726">
    <property type="entry name" value="M.Bso1395ORF2761P"/>
</dbReference>
<dbReference type="BRENDA" id="2.1.1.113">
    <property type="organism ID" value="630"/>
</dbReference>
<dbReference type="PRO" id="PR:P18051"/>
<dbReference type="GO" id="GO:0005737">
    <property type="term" value="C:cytoplasm"/>
    <property type="evidence" value="ECO:0007669"/>
    <property type="project" value="TreeGrafter"/>
</dbReference>
<dbReference type="GO" id="GO:0003677">
    <property type="term" value="F:DNA binding"/>
    <property type="evidence" value="ECO:0007669"/>
    <property type="project" value="UniProtKB-KW"/>
</dbReference>
<dbReference type="GO" id="GO:0008170">
    <property type="term" value="F:N-methyltransferase activity"/>
    <property type="evidence" value="ECO:0007669"/>
    <property type="project" value="InterPro"/>
</dbReference>
<dbReference type="GO" id="GO:0015667">
    <property type="term" value="F:site-specific DNA-methyltransferase (cytosine-N4-specific) activity"/>
    <property type="evidence" value="ECO:0007669"/>
    <property type="project" value="UniProtKB-EC"/>
</dbReference>
<dbReference type="GO" id="GO:0009307">
    <property type="term" value="P:DNA restriction-modification system"/>
    <property type="evidence" value="ECO:0007669"/>
    <property type="project" value="UniProtKB-KW"/>
</dbReference>
<dbReference type="GO" id="GO:0032259">
    <property type="term" value="P:methylation"/>
    <property type="evidence" value="ECO:0007669"/>
    <property type="project" value="UniProtKB-KW"/>
</dbReference>
<dbReference type="Gene3D" id="3.40.50.150">
    <property type="entry name" value="Vaccinia Virus protein VP39"/>
    <property type="match status" value="1"/>
</dbReference>
<dbReference type="InterPro" id="IPR002941">
    <property type="entry name" value="DNA_methylase_N4/N6"/>
</dbReference>
<dbReference type="InterPro" id="IPR017985">
    <property type="entry name" value="MeTrfase_CN4_CS"/>
</dbReference>
<dbReference type="InterPro" id="IPR001091">
    <property type="entry name" value="RM_Methyltransferase"/>
</dbReference>
<dbReference type="InterPro" id="IPR029063">
    <property type="entry name" value="SAM-dependent_MTases_sf"/>
</dbReference>
<dbReference type="PANTHER" id="PTHR13370">
    <property type="entry name" value="RNA METHYLASE-RELATED"/>
    <property type="match status" value="1"/>
</dbReference>
<dbReference type="PANTHER" id="PTHR13370:SF3">
    <property type="entry name" value="TRNA (GUANINE(10)-N2)-METHYLTRANSFERASE HOMOLOG"/>
    <property type="match status" value="1"/>
</dbReference>
<dbReference type="Pfam" id="PF01555">
    <property type="entry name" value="N6_N4_Mtase"/>
    <property type="match status" value="1"/>
</dbReference>
<dbReference type="PRINTS" id="PR00508">
    <property type="entry name" value="S21N4MTFRASE"/>
</dbReference>
<dbReference type="SUPFAM" id="SSF53335">
    <property type="entry name" value="S-adenosyl-L-methionine-dependent methyltransferases"/>
    <property type="match status" value="1"/>
</dbReference>
<dbReference type="PROSITE" id="PS00093">
    <property type="entry name" value="N4_MTASE"/>
    <property type="match status" value="1"/>
</dbReference>
<organism>
    <name type="scientific">Bacillus amyloliquefaciens</name>
    <name type="common">Bacillus velezensis</name>
    <dbReference type="NCBI Taxonomy" id="1390"/>
    <lineage>
        <taxon>Bacteria</taxon>
        <taxon>Bacillati</taxon>
        <taxon>Bacillota</taxon>
        <taxon>Bacilli</taxon>
        <taxon>Bacillales</taxon>
        <taxon>Bacillaceae</taxon>
        <taxon>Bacillus</taxon>
        <taxon>Bacillus amyloliquefaciens group</taxon>
    </lineage>
</organism>
<feature type="chain" id="PRO_0000087921" description="Orphan methyltransferase M.BamHII">
    <location>
        <begin position="1"/>
        <end position="265"/>
    </location>
</feature>
<proteinExistence type="inferred from homology"/>
<protein>
    <recommendedName>
        <fullName evidence="2">Orphan methyltransferase M.BamHII</fullName>
        <shortName evidence="2">M.BamHII</shortName>
        <ecNumber>2.1.1.113</ecNumber>
    </recommendedName>
    <alternativeName>
        <fullName>Modification methylase BamHII</fullName>
    </alternativeName>
    <alternativeName>
        <fullName>N(4)-cytosine-specific methyltransferase BamHII</fullName>
    </alternativeName>
</protein>
<evidence type="ECO:0000269" key="1">
    <source>
    </source>
</evidence>
<evidence type="ECO:0000303" key="2">
    <source>
    </source>
</evidence>
<evidence type="ECO:0000305" key="3"/>
<evidence type="ECO:0000305" key="4">
    <source>
    </source>
</evidence>
<reference key="1">
    <citation type="journal article" date="1990" name="Nucleic Acids Res.">
        <title>The complete sequence of the Bacillus amyloliquefaciens proviral H2, BamHI methylase gene.</title>
        <authorList>
            <person name="Connaughton J.F."/>
            <person name="Kaloss W.D."/>
            <person name="Vanek P.G."/>
            <person name="Nardone G.A."/>
            <person name="Chirikjian J.G."/>
        </authorList>
    </citation>
    <scope>NUCLEOTIDE SEQUENCE [GENOMIC DNA]</scope>
    <source>
        <strain>H</strain>
    </source>
</reference>
<reference key="2">
    <citation type="journal article" date="2003" name="Nucleic Acids Res.">
        <title>A nomenclature for restriction enzymes, DNA methyltransferases, homing endonucleases and their genes.</title>
        <authorList>
            <person name="Roberts R.J."/>
            <person name="Belfort M."/>
            <person name="Bestor T."/>
            <person name="Bhagwat A.S."/>
            <person name="Bickle T.A."/>
            <person name="Bitinaite J."/>
            <person name="Blumenthal R.M."/>
            <person name="Degtyarev S.K."/>
            <person name="Dryden D.T."/>
            <person name="Dybvig K."/>
            <person name="Firman K."/>
            <person name="Gromova E.S."/>
            <person name="Gumport R.I."/>
            <person name="Halford S.E."/>
            <person name="Hattman S."/>
            <person name="Heitman J."/>
            <person name="Hornby D.P."/>
            <person name="Janulaitis A."/>
            <person name="Jeltsch A."/>
            <person name="Josephsen J."/>
            <person name="Kiss A."/>
            <person name="Klaenhammer T.R."/>
            <person name="Kobayashi I."/>
            <person name="Kong H."/>
            <person name="Krueger D.H."/>
            <person name="Lacks S."/>
            <person name="Marinus M.G."/>
            <person name="Miyahara M."/>
            <person name="Morgan R.D."/>
            <person name="Murray N.E."/>
            <person name="Nagaraja V."/>
            <person name="Piekarowicz A."/>
            <person name="Pingoud A."/>
            <person name="Raleigh E."/>
            <person name="Rao D.N."/>
            <person name="Reich N."/>
            <person name="Repin V.E."/>
            <person name="Selker E.U."/>
            <person name="Shaw P.C."/>
            <person name="Stein D.C."/>
            <person name="Stoddard B.L."/>
            <person name="Szybalski W."/>
            <person name="Trautner T.A."/>
            <person name="Van Etten J.L."/>
            <person name="Vitor J.M."/>
            <person name="Wilson G.G."/>
            <person name="Xu S.Y."/>
        </authorList>
    </citation>
    <scope>NOMENCLATURE</scope>
    <scope>SUBTYPE</scope>
</reference>
<comment type="function">
    <text evidence="2 4">A beta subtype methylase, recognizes the double-stranded sequence 5'-GGATCC-3', methylates C-? on both strands. No endonuclease has been identified for this methylase, although it is speculated it might protect against BamHI.</text>
</comment>
<comment type="catalytic activity">
    <reaction>
        <text>a 2'-deoxycytidine in DNA + S-adenosyl-L-methionine = an N(4)-methyl-2'-deoxycytidine in DNA + S-adenosyl-L-homocysteine + H(+)</text>
        <dbReference type="Rhea" id="RHEA:16857"/>
        <dbReference type="Rhea" id="RHEA-COMP:11369"/>
        <dbReference type="Rhea" id="RHEA-COMP:13674"/>
        <dbReference type="ChEBI" id="CHEBI:15378"/>
        <dbReference type="ChEBI" id="CHEBI:57856"/>
        <dbReference type="ChEBI" id="CHEBI:59789"/>
        <dbReference type="ChEBI" id="CHEBI:85452"/>
        <dbReference type="ChEBI" id="CHEBI:137933"/>
        <dbReference type="EC" id="2.1.1.113"/>
    </reaction>
</comment>
<comment type="miscellaneous">
    <text evidence="1">This methylase is encoded on the proviral phage H2.</text>
</comment>
<comment type="similarity">
    <text evidence="3">Belongs to the N(4)/N(6)-methyltransferase family. N(4) subfamily.</text>
</comment>
<accession>P18051</accession>
<sequence>MKENIGDCTIDLTVTSPPYDDLRNYNGYSFNFEETAQELYRVTKEGGVVVWVVGDKTHKGSETGSSFRQALYFKELGFNLHDTMIYEKDSISFPDKNRYYQIFEYMFIFSKGKPKTINLLADRKNKWYNGKKHIKGHYRKMDGEKVRHHKQNLLKEFGVRFNIWRIPNGHQKSTLDKIAFQHPAIFPEKLAEDHILSWSNEGDIVFDPFMGSGTTAKMAALNNRKYIGTEISKEYCDIANERLKNYIILHKRMEGKGYRLPQVHS</sequence>
<gene>
    <name type="primary">bamHIIM</name>
</gene>